<accession>Q2SML5</accession>
<reference key="1">
    <citation type="journal article" date="2005" name="Nucleic Acids Res.">
        <title>Genomic blueprint of Hahella chejuensis, a marine microbe producing an algicidal agent.</title>
        <authorList>
            <person name="Jeong H."/>
            <person name="Yim J.H."/>
            <person name="Lee C."/>
            <person name="Choi S.-H."/>
            <person name="Park Y.K."/>
            <person name="Yoon S.H."/>
            <person name="Hur C.-G."/>
            <person name="Kang H.-Y."/>
            <person name="Kim D."/>
            <person name="Lee H.H."/>
            <person name="Park K.H."/>
            <person name="Park S.-H."/>
            <person name="Park H.-S."/>
            <person name="Lee H.K."/>
            <person name="Oh T.K."/>
            <person name="Kim J.F."/>
        </authorList>
    </citation>
    <scope>NUCLEOTIDE SEQUENCE [LARGE SCALE GENOMIC DNA]</scope>
    <source>
        <strain>KCTC 2396</strain>
    </source>
</reference>
<gene>
    <name evidence="1" type="primary">rimP</name>
    <name type="ordered locus">HCH_01237</name>
</gene>
<sequence length="150" mass="17093">MARKDDLYQLLKPVVEGMGCDFWGMDYIAQGKRSLLRIYIDKESGVLVDDCEKVSRQISAILDVEDPIKGEYTLEVSSPGWDRPLFNVEQYKAYIGSIIEVRLQAPFNGRRKFKGLLAAVENDEIVLQVDAEEFIFPVETIDKANVVPQY</sequence>
<dbReference type="EMBL" id="CP000155">
    <property type="protein sequence ID" value="ABC28109.1"/>
    <property type="status" value="ALT_INIT"/>
    <property type="molecule type" value="Genomic_DNA"/>
</dbReference>
<dbReference type="SMR" id="Q2SML5"/>
<dbReference type="STRING" id="349521.HCH_01237"/>
<dbReference type="KEGG" id="hch:HCH_01237"/>
<dbReference type="eggNOG" id="COG0779">
    <property type="taxonomic scope" value="Bacteria"/>
</dbReference>
<dbReference type="HOGENOM" id="CLU_070525_1_1_6"/>
<dbReference type="Proteomes" id="UP000000238">
    <property type="component" value="Chromosome"/>
</dbReference>
<dbReference type="GO" id="GO:0005829">
    <property type="term" value="C:cytosol"/>
    <property type="evidence" value="ECO:0007669"/>
    <property type="project" value="TreeGrafter"/>
</dbReference>
<dbReference type="GO" id="GO:0000028">
    <property type="term" value="P:ribosomal small subunit assembly"/>
    <property type="evidence" value="ECO:0007669"/>
    <property type="project" value="TreeGrafter"/>
</dbReference>
<dbReference type="GO" id="GO:0006412">
    <property type="term" value="P:translation"/>
    <property type="evidence" value="ECO:0007669"/>
    <property type="project" value="TreeGrafter"/>
</dbReference>
<dbReference type="CDD" id="cd01734">
    <property type="entry name" value="YlxS_C"/>
    <property type="match status" value="1"/>
</dbReference>
<dbReference type="FunFam" id="3.30.300.70:FF:000001">
    <property type="entry name" value="Ribosome maturation factor RimP"/>
    <property type="match status" value="1"/>
</dbReference>
<dbReference type="Gene3D" id="2.30.30.180">
    <property type="entry name" value="Ribosome maturation factor RimP, C-terminal domain"/>
    <property type="match status" value="1"/>
</dbReference>
<dbReference type="Gene3D" id="3.30.300.70">
    <property type="entry name" value="RimP-like superfamily, N-terminal"/>
    <property type="match status" value="1"/>
</dbReference>
<dbReference type="HAMAP" id="MF_01077">
    <property type="entry name" value="RimP"/>
    <property type="match status" value="1"/>
</dbReference>
<dbReference type="InterPro" id="IPR003728">
    <property type="entry name" value="Ribosome_maturation_RimP"/>
</dbReference>
<dbReference type="InterPro" id="IPR028998">
    <property type="entry name" value="RimP_C"/>
</dbReference>
<dbReference type="InterPro" id="IPR036847">
    <property type="entry name" value="RimP_C_sf"/>
</dbReference>
<dbReference type="InterPro" id="IPR028989">
    <property type="entry name" value="RimP_N"/>
</dbReference>
<dbReference type="InterPro" id="IPR035956">
    <property type="entry name" value="RimP_N_sf"/>
</dbReference>
<dbReference type="NCBIfam" id="NF000927">
    <property type="entry name" value="PRK00092.1-1"/>
    <property type="match status" value="1"/>
</dbReference>
<dbReference type="PANTHER" id="PTHR33867">
    <property type="entry name" value="RIBOSOME MATURATION FACTOR RIMP"/>
    <property type="match status" value="1"/>
</dbReference>
<dbReference type="PANTHER" id="PTHR33867:SF1">
    <property type="entry name" value="RIBOSOME MATURATION FACTOR RIMP"/>
    <property type="match status" value="1"/>
</dbReference>
<dbReference type="Pfam" id="PF17384">
    <property type="entry name" value="DUF150_C"/>
    <property type="match status" value="1"/>
</dbReference>
<dbReference type="Pfam" id="PF02576">
    <property type="entry name" value="RimP_N"/>
    <property type="match status" value="1"/>
</dbReference>
<dbReference type="SUPFAM" id="SSF74942">
    <property type="entry name" value="YhbC-like, C-terminal domain"/>
    <property type="match status" value="1"/>
</dbReference>
<dbReference type="SUPFAM" id="SSF75420">
    <property type="entry name" value="YhbC-like, N-terminal domain"/>
    <property type="match status" value="1"/>
</dbReference>
<evidence type="ECO:0000255" key="1">
    <source>
        <dbReference type="HAMAP-Rule" id="MF_01077"/>
    </source>
</evidence>
<evidence type="ECO:0000305" key="2"/>
<proteinExistence type="inferred from homology"/>
<comment type="function">
    <text evidence="1">Required for maturation of 30S ribosomal subunits.</text>
</comment>
<comment type="subcellular location">
    <subcellularLocation>
        <location evidence="1">Cytoplasm</location>
    </subcellularLocation>
</comment>
<comment type="similarity">
    <text evidence="1">Belongs to the RimP family.</text>
</comment>
<comment type="sequence caution" evidence="2">
    <conflict type="erroneous initiation">
        <sequence resource="EMBL-CDS" id="ABC28109"/>
    </conflict>
</comment>
<organism>
    <name type="scientific">Hahella chejuensis (strain KCTC 2396)</name>
    <dbReference type="NCBI Taxonomy" id="349521"/>
    <lineage>
        <taxon>Bacteria</taxon>
        <taxon>Pseudomonadati</taxon>
        <taxon>Pseudomonadota</taxon>
        <taxon>Gammaproteobacteria</taxon>
        <taxon>Oceanospirillales</taxon>
        <taxon>Hahellaceae</taxon>
        <taxon>Hahella</taxon>
    </lineage>
</organism>
<keyword id="KW-0963">Cytoplasm</keyword>
<keyword id="KW-1185">Reference proteome</keyword>
<keyword id="KW-0690">Ribosome biogenesis</keyword>
<name>RIMP_HAHCH</name>
<protein>
    <recommendedName>
        <fullName evidence="1">Ribosome maturation factor RimP</fullName>
    </recommendedName>
</protein>
<feature type="chain" id="PRO_0000384678" description="Ribosome maturation factor RimP">
    <location>
        <begin position="1"/>
        <end position="150"/>
    </location>
</feature>